<name>LEU1_CAMJJ</name>
<dbReference type="EC" id="2.3.3.13" evidence="1"/>
<dbReference type="EMBL" id="CP000538">
    <property type="protein sequence ID" value="EAQ71916.1"/>
    <property type="molecule type" value="Genomic_DNA"/>
</dbReference>
<dbReference type="RefSeq" id="WP_002868995.1">
    <property type="nucleotide sequence ID" value="NC_008787.1"/>
</dbReference>
<dbReference type="SMR" id="A1W1X2"/>
<dbReference type="KEGG" id="cjj:CJJ81176_0017"/>
<dbReference type="eggNOG" id="COG0119">
    <property type="taxonomic scope" value="Bacteria"/>
</dbReference>
<dbReference type="HOGENOM" id="CLU_022158_0_1_7"/>
<dbReference type="UniPathway" id="UPA00048">
    <property type="reaction ID" value="UER00070"/>
</dbReference>
<dbReference type="Proteomes" id="UP000000646">
    <property type="component" value="Chromosome"/>
</dbReference>
<dbReference type="GO" id="GO:0005829">
    <property type="term" value="C:cytosol"/>
    <property type="evidence" value="ECO:0007669"/>
    <property type="project" value="TreeGrafter"/>
</dbReference>
<dbReference type="GO" id="GO:0003852">
    <property type="term" value="F:2-isopropylmalate synthase activity"/>
    <property type="evidence" value="ECO:0007669"/>
    <property type="project" value="UniProtKB-UniRule"/>
</dbReference>
<dbReference type="GO" id="GO:0003985">
    <property type="term" value="F:acetyl-CoA C-acetyltransferase activity"/>
    <property type="evidence" value="ECO:0007669"/>
    <property type="project" value="UniProtKB-UniRule"/>
</dbReference>
<dbReference type="GO" id="GO:0030145">
    <property type="term" value="F:manganese ion binding"/>
    <property type="evidence" value="ECO:0007669"/>
    <property type="project" value="UniProtKB-UniRule"/>
</dbReference>
<dbReference type="GO" id="GO:0009098">
    <property type="term" value="P:L-leucine biosynthetic process"/>
    <property type="evidence" value="ECO:0007669"/>
    <property type="project" value="UniProtKB-UniRule"/>
</dbReference>
<dbReference type="CDD" id="cd07940">
    <property type="entry name" value="DRE_TIM_IPMS"/>
    <property type="match status" value="1"/>
</dbReference>
<dbReference type="FunFam" id="1.10.238.260:FF:000001">
    <property type="entry name" value="2-isopropylmalate synthase"/>
    <property type="match status" value="1"/>
</dbReference>
<dbReference type="FunFam" id="3.20.20.70:FF:000010">
    <property type="entry name" value="2-isopropylmalate synthase"/>
    <property type="match status" value="1"/>
</dbReference>
<dbReference type="Gene3D" id="1.10.238.260">
    <property type="match status" value="1"/>
</dbReference>
<dbReference type="Gene3D" id="3.30.160.270">
    <property type="match status" value="1"/>
</dbReference>
<dbReference type="Gene3D" id="3.20.20.70">
    <property type="entry name" value="Aldolase class I"/>
    <property type="match status" value="1"/>
</dbReference>
<dbReference type="HAMAP" id="MF_01025">
    <property type="entry name" value="LeuA_type1"/>
    <property type="match status" value="1"/>
</dbReference>
<dbReference type="InterPro" id="IPR050073">
    <property type="entry name" value="2-IPM_HCS-like"/>
</dbReference>
<dbReference type="InterPro" id="IPR013709">
    <property type="entry name" value="2-isopropylmalate_synth_dimer"/>
</dbReference>
<dbReference type="InterPro" id="IPR002034">
    <property type="entry name" value="AIPM/Hcit_synth_CS"/>
</dbReference>
<dbReference type="InterPro" id="IPR013785">
    <property type="entry name" value="Aldolase_TIM"/>
</dbReference>
<dbReference type="InterPro" id="IPR054691">
    <property type="entry name" value="LeuA/HCS_post-cat"/>
</dbReference>
<dbReference type="InterPro" id="IPR036230">
    <property type="entry name" value="LeuA_allosteric_dom_sf"/>
</dbReference>
<dbReference type="InterPro" id="IPR005671">
    <property type="entry name" value="LeuA_bact_synth"/>
</dbReference>
<dbReference type="InterPro" id="IPR000891">
    <property type="entry name" value="PYR_CT"/>
</dbReference>
<dbReference type="NCBIfam" id="TIGR00973">
    <property type="entry name" value="leuA_bact"/>
    <property type="match status" value="1"/>
</dbReference>
<dbReference type="NCBIfam" id="NF002084">
    <property type="entry name" value="PRK00915.1-1"/>
    <property type="match status" value="1"/>
</dbReference>
<dbReference type="NCBIfam" id="NF002086">
    <property type="entry name" value="PRK00915.1-3"/>
    <property type="match status" value="1"/>
</dbReference>
<dbReference type="PANTHER" id="PTHR10277:SF9">
    <property type="entry name" value="2-ISOPROPYLMALATE SYNTHASE 1, CHLOROPLASTIC-RELATED"/>
    <property type="match status" value="1"/>
</dbReference>
<dbReference type="PANTHER" id="PTHR10277">
    <property type="entry name" value="HOMOCITRATE SYNTHASE-RELATED"/>
    <property type="match status" value="1"/>
</dbReference>
<dbReference type="Pfam" id="PF22617">
    <property type="entry name" value="HCS_D2"/>
    <property type="match status" value="1"/>
</dbReference>
<dbReference type="Pfam" id="PF00682">
    <property type="entry name" value="HMGL-like"/>
    <property type="match status" value="1"/>
</dbReference>
<dbReference type="Pfam" id="PF08502">
    <property type="entry name" value="LeuA_dimer"/>
    <property type="match status" value="1"/>
</dbReference>
<dbReference type="SMART" id="SM00917">
    <property type="entry name" value="LeuA_dimer"/>
    <property type="match status" value="1"/>
</dbReference>
<dbReference type="SUPFAM" id="SSF110921">
    <property type="entry name" value="2-isopropylmalate synthase LeuA, allosteric (dimerisation) domain"/>
    <property type="match status" value="1"/>
</dbReference>
<dbReference type="SUPFAM" id="SSF51569">
    <property type="entry name" value="Aldolase"/>
    <property type="match status" value="1"/>
</dbReference>
<dbReference type="PROSITE" id="PS00815">
    <property type="entry name" value="AIPM_HOMOCIT_SYNTH_1"/>
    <property type="match status" value="1"/>
</dbReference>
<dbReference type="PROSITE" id="PS00816">
    <property type="entry name" value="AIPM_HOMOCIT_SYNTH_2"/>
    <property type="match status" value="1"/>
</dbReference>
<dbReference type="PROSITE" id="PS50991">
    <property type="entry name" value="PYR_CT"/>
    <property type="match status" value="1"/>
</dbReference>
<proteinExistence type="inferred from homology"/>
<evidence type="ECO:0000255" key="1">
    <source>
        <dbReference type="HAMAP-Rule" id="MF_01025"/>
    </source>
</evidence>
<reference key="1">
    <citation type="submission" date="2006-12" db="EMBL/GenBank/DDBJ databases">
        <authorList>
            <person name="Fouts D.E."/>
            <person name="Nelson K.E."/>
            <person name="Sebastian Y."/>
        </authorList>
    </citation>
    <scope>NUCLEOTIDE SEQUENCE [LARGE SCALE GENOMIC DNA]</scope>
    <source>
        <strain>81-176</strain>
    </source>
</reference>
<protein>
    <recommendedName>
        <fullName evidence="1">2-isopropylmalate synthase</fullName>
        <ecNumber evidence="1">2.3.3.13</ecNumber>
    </recommendedName>
    <alternativeName>
        <fullName evidence="1">Alpha-IPM synthase</fullName>
    </alternativeName>
    <alternativeName>
        <fullName evidence="1">Alpha-isopropylmalate synthase</fullName>
    </alternativeName>
</protein>
<keyword id="KW-0028">Amino-acid biosynthesis</keyword>
<keyword id="KW-0100">Branched-chain amino acid biosynthesis</keyword>
<keyword id="KW-0963">Cytoplasm</keyword>
<keyword id="KW-0432">Leucine biosynthesis</keyword>
<keyword id="KW-0464">Manganese</keyword>
<keyword id="KW-0479">Metal-binding</keyword>
<keyword id="KW-0808">Transferase</keyword>
<organism>
    <name type="scientific">Campylobacter jejuni subsp. jejuni serotype O:23/36 (strain 81-176)</name>
    <dbReference type="NCBI Taxonomy" id="354242"/>
    <lineage>
        <taxon>Bacteria</taxon>
        <taxon>Pseudomonadati</taxon>
        <taxon>Campylobacterota</taxon>
        <taxon>Epsilonproteobacteria</taxon>
        <taxon>Campylobacterales</taxon>
        <taxon>Campylobacteraceae</taxon>
        <taxon>Campylobacter</taxon>
    </lineage>
</organism>
<sequence>MKDNKIIIFDTTLRDGEQALGSSLGINQKLQIALALENLGVDVIEAGFPVSSQGDFKAVQKIASKVKNSTICALSRALDKDIDMAYEALKVAKHFRIHTFIATSTLHMQDKLKKDFDEILSMAKRAIIRARSYTDDVEFSCEDAGRTPIDNLCFMVENAIKAGAKTINIPDTVGYTLPSEFANIIKILFNKVPNIDKAIISVHCHNDLGVATGNSLSAILQGARQIECTINGLGERAGNCALEEVVMAIKTRKDYLKGFYTDIKCENIFKTSKLVSAITNESIPSHKAIVGSNAFSHSSGIHQDGVLKNRQTYEIISPSAIGIHENRMLMTARSGRAMIKTCLENLGYDENTYNLDDVYERFLRLADKKGQVYDYDLEALMFLSYENEEENEFVIEKLSVISGNIPTACVCMRIKEELKTEACTGNGPVEAVFNCIARITNLKPALKAYSINAKSSGVDAQGQVDVDLEFKGRKFHGKGISTDVIEASAQAFVSAYNAIYRSLKVEERKMA</sequence>
<feature type="chain" id="PRO_1000149163" description="2-isopropylmalate synthase">
    <location>
        <begin position="1"/>
        <end position="511"/>
    </location>
</feature>
<feature type="domain" description="Pyruvate carboxyltransferase" evidence="1">
    <location>
        <begin position="6"/>
        <end position="269"/>
    </location>
</feature>
<feature type="region of interest" description="Regulatory domain" evidence="1">
    <location>
        <begin position="394"/>
        <end position="511"/>
    </location>
</feature>
<feature type="binding site" evidence="1">
    <location>
        <position position="15"/>
    </location>
    <ligand>
        <name>Mn(2+)</name>
        <dbReference type="ChEBI" id="CHEBI:29035"/>
    </ligand>
</feature>
<feature type="binding site" evidence="1">
    <location>
        <position position="203"/>
    </location>
    <ligand>
        <name>Mn(2+)</name>
        <dbReference type="ChEBI" id="CHEBI:29035"/>
    </ligand>
</feature>
<feature type="binding site" evidence="1">
    <location>
        <position position="205"/>
    </location>
    <ligand>
        <name>Mn(2+)</name>
        <dbReference type="ChEBI" id="CHEBI:29035"/>
    </ligand>
</feature>
<feature type="binding site" evidence="1">
    <location>
        <position position="239"/>
    </location>
    <ligand>
        <name>Mn(2+)</name>
        <dbReference type="ChEBI" id="CHEBI:29035"/>
    </ligand>
</feature>
<gene>
    <name evidence="1" type="primary">leuA</name>
    <name type="ordered locus">CJJ81176_0017</name>
</gene>
<accession>A1W1X2</accession>
<comment type="function">
    <text evidence="1">Catalyzes the condensation of the acetyl group of acetyl-CoA with 3-methyl-2-oxobutanoate (2-ketoisovalerate) to form 3-carboxy-3-hydroxy-4-methylpentanoate (2-isopropylmalate).</text>
</comment>
<comment type="catalytic activity">
    <reaction evidence="1">
        <text>3-methyl-2-oxobutanoate + acetyl-CoA + H2O = (2S)-2-isopropylmalate + CoA + H(+)</text>
        <dbReference type="Rhea" id="RHEA:21524"/>
        <dbReference type="ChEBI" id="CHEBI:1178"/>
        <dbReference type="ChEBI" id="CHEBI:11851"/>
        <dbReference type="ChEBI" id="CHEBI:15377"/>
        <dbReference type="ChEBI" id="CHEBI:15378"/>
        <dbReference type="ChEBI" id="CHEBI:57287"/>
        <dbReference type="ChEBI" id="CHEBI:57288"/>
        <dbReference type="EC" id="2.3.3.13"/>
    </reaction>
</comment>
<comment type="cofactor">
    <cofactor evidence="1">
        <name>Mn(2+)</name>
        <dbReference type="ChEBI" id="CHEBI:29035"/>
    </cofactor>
</comment>
<comment type="pathway">
    <text evidence="1">Amino-acid biosynthesis; L-leucine biosynthesis; L-leucine from 3-methyl-2-oxobutanoate: step 1/4.</text>
</comment>
<comment type="subunit">
    <text evidence="1">Homodimer.</text>
</comment>
<comment type="subcellular location">
    <subcellularLocation>
        <location evidence="1">Cytoplasm</location>
    </subcellularLocation>
</comment>
<comment type="similarity">
    <text evidence="1">Belongs to the alpha-IPM synthase/homocitrate synthase family. LeuA type 1 subfamily.</text>
</comment>